<name>PBO6_CAEEL</name>
<evidence type="ECO:0000250" key="1">
    <source>
        <dbReference type="UniProtKB" id="P02712"/>
    </source>
</evidence>
<evidence type="ECO:0000255" key="2"/>
<evidence type="ECO:0000269" key="3">
    <source>
    </source>
</evidence>
<evidence type="ECO:0000303" key="4">
    <source>
    </source>
</evidence>
<evidence type="ECO:0000305" key="5"/>
<evidence type="ECO:0000312" key="6">
    <source>
        <dbReference type="EMBL" id="CCD66918.1"/>
    </source>
</evidence>
<evidence type="ECO:0000312" key="7">
    <source>
        <dbReference type="WormBase" id="F11C7.1"/>
    </source>
</evidence>
<keyword id="KW-1015">Disulfide bond</keyword>
<keyword id="KW-0407">Ion channel</keyword>
<keyword id="KW-0406">Ion transport</keyword>
<keyword id="KW-0472">Membrane</keyword>
<keyword id="KW-0675">Receptor</keyword>
<keyword id="KW-1185">Reference proteome</keyword>
<keyword id="KW-0732">Signal</keyword>
<keyword id="KW-0812">Transmembrane</keyword>
<keyword id="KW-1133">Transmembrane helix</keyword>
<keyword id="KW-0813">Transport</keyword>
<gene>
    <name evidence="6 7" type="primary">pbo-6</name>
    <name evidence="6 7" type="synonym">lgc-3</name>
    <name type="ORF">F11C7.1</name>
</gene>
<protein>
    <recommendedName>
        <fullName evidence="4">Proton-gated ion channel subunit pbo-6</fullName>
    </recommendedName>
    <alternativeName>
        <fullName evidence="4">PBoc defective protein pbo-6</fullName>
    </alternativeName>
</protein>
<accession>Q19351</accession>
<accession>G4S6G6</accession>
<feature type="signal peptide" evidence="2">
    <location>
        <begin position="1"/>
        <end position="20"/>
    </location>
</feature>
<feature type="chain" id="PRO_0000424149" description="Proton-gated ion channel subunit pbo-6" evidence="2">
    <location>
        <begin position="21"/>
        <end position="422"/>
    </location>
</feature>
<feature type="topological domain" description="Extracellular" evidence="2">
    <location>
        <begin position="21"/>
        <end position="233"/>
    </location>
</feature>
<feature type="transmembrane region" description="Helical" evidence="2">
    <location>
        <begin position="234"/>
        <end position="254"/>
    </location>
</feature>
<feature type="transmembrane region" description="Helical" evidence="2">
    <location>
        <begin position="268"/>
        <end position="288"/>
    </location>
</feature>
<feature type="transmembrane region" description="Helical" evidence="2">
    <location>
        <begin position="294"/>
        <end position="314"/>
    </location>
</feature>
<feature type="topological domain" description="Cytoplasmic" evidence="2">
    <location>
        <begin position="315"/>
        <end position="378"/>
    </location>
</feature>
<feature type="transmembrane region" description="Helical" evidence="2">
    <location>
        <begin position="379"/>
        <end position="399"/>
    </location>
</feature>
<feature type="disulfide bond" evidence="1">
    <location>
        <begin position="151"/>
        <end position="165"/>
    </location>
</feature>
<reference evidence="5" key="1">
    <citation type="journal article" date="2008" name="Cell">
        <title>Protons act as a transmitter for muscle contraction in C. elegans.</title>
        <authorList>
            <person name="Beg A.A."/>
            <person name="Ernstrom G.G."/>
            <person name="Nix P."/>
            <person name="Davis M.W."/>
            <person name="Jorgensen E.M."/>
        </authorList>
    </citation>
    <scope>NUCLEOTIDE SEQUENCE [MRNA]</scope>
    <scope>FUNCTION</scope>
    <scope>SUBUNIT</scope>
    <scope>SUBCELLULAR LOCATION</scope>
    <scope>TISSUE SPECIFICITY</scope>
    <scope>DISRUPTION PHENOTYPE</scope>
    <source>
        <strain evidence="3">Bristol N2</strain>
    </source>
</reference>
<reference evidence="6" key="2">
    <citation type="journal article" date="1998" name="Science">
        <title>Genome sequence of the nematode C. elegans: a platform for investigating biology.</title>
        <authorList>
            <consortium name="The C. elegans sequencing consortium"/>
        </authorList>
    </citation>
    <scope>NUCLEOTIDE SEQUENCE [LARGE SCALE GENOMIC DNA]</scope>
    <source>
        <strain evidence="6">Bristol N2</strain>
    </source>
</reference>
<comment type="function">
    <text evidence="3">Forms a proton-gated ion channel with pbo-5 that is activated by acidification of the posterior coelomic space, leading to posterior body wall muscle contraction (pBoc) during the defecation cycle. Not necessary for stimulation of posterior body contraction (pBoc). Does not bind neurotransmitters such as acetylcholine, gamma-aminobutyric acid, glycine, serotonin, glutamate or choline.</text>
</comment>
<comment type="subunit">
    <text evidence="3">The functional channel is a hetero-oligomer of pbo-5 and pbo-6.</text>
</comment>
<comment type="subcellular location">
    <subcellularLocation>
        <location evidence="3">Membrane</location>
        <topology evidence="3">Multi-pass membrane protein</topology>
    </subcellularLocation>
</comment>
<comment type="tissue specificity">
    <text evidence="3">Expressed in the posterior body muscles.</text>
</comment>
<comment type="disruption phenotype">
    <text evidence="3">No visible phenotype. Mutants exhibit normal posterior body contractions.</text>
</comment>
<comment type="similarity">
    <text evidence="2">Belongs to the ligand-gated ion channel (TC 1.A.9) family. Acetylcholine receptor (TC 1.A.9.1) subfamily.</text>
</comment>
<sequence length="422" mass="48982">MQCSFLTIFIFITTVTVGVAEFSEQYQGSSSRLTRHLLEKHNKCSPPDGRVDISHNIELVHIIGINELNQNMQVLVYIVQQWTDASLSWKVEEFRGIKHTWLPEHSIWIPDIIVFNTLEHKMLLEAVRSPIKVSYTGEVTYAYPAIYTVLCQIGIATFPFDDQVCKIRFASWAYDEDKILLNASHKPLLKNYSPNEEWALQDVDMARKEYEHEETVVSEIIYYIKVARKPFYYLISLVVPSYIICVLSIAGLFARFSTKHERQERFTLGVTAILSMAVLSLVVTEKVPHSSENVPLLIVYMHFIIVMVTIATILTSTVMRVHAKGFRTHFLSPPNWIRKVLLIARKHANFFQQHGKVYMDIHTTAEQWGEVSRRMDYLLASVFIIIISTPTLYLFYMCFQMDHATAERVLLENAKRRDQLYY</sequence>
<proteinExistence type="evidence at protein level"/>
<organism>
    <name type="scientific">Caenorhabditis elegans</name>
    <dbReference type="NCBI Taxonomy" id="6239"/>
    <lineage>
        <taxon>Eukaryota</taxon>
        <taxon>Metazoa</taxon>
        <taxon>Ecdysozoa</taxon>
        <taxon>Nematoda</taxon>
        <taxon>Chromadorea</taxon>
        <taxon>Rhabditida</taxon>
        <taxon>Rhabditina</taxon>
        <taxon>Rhabditomorpha</taxon>
        <taxon>Rhabditoidea</taxon>
        <taxon>Rhabditidae</taxon>
        <taxon>Peloderinae</taxon>
        <taxon>Caenorhabditis</taxon>
    </lineage>
</organism>
<dbReference type="EMBL" id="FO080804">
    <property type="protein sequence ID" value="CCD66918.1"/>
    <property type="molecule type" value="Genomic_DNA"/>
</dbReference>
<dbReference type="EMBL" id="FO080802">
    <property type="protein sequence ID" value="CCD66918.1"/>
    <property type="status" value="JOINED"/>
    <property type="molecule type" value="Genomic_DNA"/>
</dbReference>
<dbReference type="RefSeq" id="NP_001294833.1">
    <property type="nucleotide sequence ID" value="NM_001307904.3"/>
</dbReference>
<dbReference type="SMR" id="Q19351"/>
<dbReference type="FunCoup" id="Q19351">
    <property type="interactions" value="73"/>
</dbReference>
<dbReference type="STRING" id="6239.F11C7.1.1"/>
<dbReference type="PaxDb" id="6239-F11C7.1"/>
<dbReference type="EnsemblMetazoa" id="F11C7.1.1">
    <property type="protein sequence ID" value="F11C7.1.1"/>
    <property type="gene ID" value="WBGene00017375"/>
</dbReference>
<dbReference type="GeneID" id="24104421"/>
<dbReference type="KEGG" id="cel:CELE_F11C7.1"/>
<dbReference type="UCSC" id="F11C7.1">
    <property type="organism name" value="c. elegans"/>
</dbReference>
<dbReference type="AGR" id="WB:WBGene00017375"/>
<dbReference type="CTD" id="24104421"/>
<dbReference type="WormBase" id="F11C7.1">
    <property type="protein sequence ID" value="CE42343"/>
    <property type="gene ID" value="WBGene00017375"/>
    <property type="gene designation" value="pbo-6"/>
</dbReference>
<dbReference type="eggNOG" id="KOG3645">
    <property type="taxonomic scope" value="Eukaryota"/>
</dbReference>
<dbReference type="HOGENOM" id="CLU_018074_2_1_1"/>
<dbReference type="InParanoid" id="Q19351"/>
<dbReference type="OMA" id="ARKEYEH"/>
<dbReference type="OrthoDB" id="410315at2759"/>
<dbReference type="PhylomeDB" id="Q19351"/>
<dbReference type="Reactome" id="R-CEL-629587">
    <property type="pathway name" value="Highly sodium permeable postsynaptic acetylcholine nicotinic receptors"/>
</dbReference>
<dbReference type="Reactome" id="R-CEL-629594">
    <property type="pathway name" value="Highly calcium permeable postsynaptic nicotinic acetylcholine receptors"/>
</dbReference>
<dbReference type="Reactome" id="R-CEL-629597">
    <property type="pathway name" value="Highly calcium permeable nicotinic acetylcholine receptors"/>
</dbReference>
<dbReference type="PRO" id="PR:Q19351"/>
<dbReference type="Proteomes" id="UP000001940">
    <property type="component" value="Chromosome X"/>
</dbReference>
<dbReference type="Bgee" id="WBGene00017375">
    <property type="expression patterns" value="Expressed in larva and 2 other cell types or tissues"/>
</dbReference>
<dbReference type="GO" id="GO:0005892">
    <property type="term" value="C:acetylcholine-gated channel complex"/>
    <property type="evidence" value="ECO:0000318"/>
    <property type="project" value="GO_Central"/>
</dbReference>
<dbReference type="GO" id="GO:0043005">
    <property type="term" value="C:neuron projection"/>
    <property type="evidence" value="ECO:0000318"/>
    <property type="project" value="GO_Central"/>
</dbReference>
<dbReference type="GO" id="GO:0005886">
    <property type="term" value="C:plasma membrane"/>
    <property type="evidence" value="ECO:0000318"/>
    <property type="project" value="GO_Central"/>
</dbReference>
<dbReference type="GO" id="GO:0098794">
    <property type="term" value="C:postsynapse"/>
    <property type="evidence" value="ECO:0007669"/>
    <property type="project" value="GOC"/>
</dbReference>
<dbReference type="GO" id="GO:0045202">
    <property type="term" value="C:synapse"/>
    <property type="evidence" value="ECO:0000318"/>
    <property type="project" value="GO_Central"/>
</dbReference>
<dbReference type="GO" id="GO:0005231">
    <property type="term" value="F:excitatory extracellular ligand-gated monoatomic ion channel activity"/>
    <property type="evidence" value="ECO:0000318"/>
    <property type="project" value="GO_Central"/>
</dbReference>
<dbReference type="GO" id="GO:0005230">
    <property type="term" value="F:extracellular ligand-gated monoatomic ion channel activity"/>
    <property type="evidence" value="ECO:0000314"/>
    <property type="project" value="WormBase"/>
</dbReference>
<dbReference type="GO" id="GO:0004888">
    <property type="term" value="F:transmembrane signaling receptor activity"/>
    <property type="evidence" value="ECO:0007669"/>
    <property type="project" value="InterPro"/>
</dbReference>
<dbReference type="GO" id="GO:1904315">
    <property type="term" value="F:transmitter-gated monoatomic ion channel activity involved in regulation of postsynaptic membrane potential"/>
    <property type="evidence" value="ECO:0000318"/>
    <property type="project" value="GO_Central"/>
</dbReference>
<dbReference type="GO" id="GO:0007268">
    <property type="term" value="P:chemical synaptic transmission"/>
    <property type="evidence" value="ECO:0000318"/>
    <property type="project" value="GO_Central"/>
</dbReference>
<dbReference type="GO" id="GO:0034220">
    <property type="term" value="P:monoatomic ion transmembrane transport"/>
    <property type="evidence" value="ECO:0000318"/>
    <property type="project" value="GO_Central"/>
</dbReference>
<dbReference type="GO" id="GO:0042391">
    <property type="term" value="P:regulation of membrane potential"/>
    <property type="evidence" value="ECO:0000318"/>
    <property type="project" value="GO_Central"/>
</dbReference>
<dbReference type="CDD" id="cd18989">
    <property type="entry name" value="LGIC_ECD_cation"/>
    <property type="match status" value="1"/>
</dbReference>
<dbReference type="CDD" id="cd19051">
    <property type="entry name" value="LGIC_TM_cation"/>
    <property type="match status" value="1"/>
</dbReference>
<dbReference type="FunFam" id="1.20.58.390:FF:000081">
    <property type="entry name" value="Proton-gated ion channel subunit pbo-5"/>
    <property type="match status" value="1"/>
</dbReference>
<dbReference type="FunFam" id="2.70.170.10:FF:000055">
    <property type="entry name" value="Proton-gated ion channel subunit pbo-6"/>
    <property type="match status" value="1"/>
</dbReference>
<dbReference type="Gene3D" id="2.70.170.10">
    <property type="entry name" value="Neurotransmitter-gated ion-channel ligand-binding domain"/>
    <property type="match status" value="1"/>
</dbReference>
<dbReference type="Gene3D" id="1.20.58.390">
    <property type="entry name" value="Neurotransmitter-gated ion-channel transmembrane domain"/>
    <property type="match status" value="1"/>
</dbReference>
<dbReference type="InterPro" id="IPR006202">
    <property type="entry name" value="Neur_chan_lig-bd"/>
</dbReference>
<dbReference type="InterPro" id="IPR036734">
    <property type="entry name" value="Neur_chan_lig-bd_sf"/>
</dbReference>
<dbReference type="InterPro" id="IPR006201">
    <property type="entry name" value="Neur_channel"/>
</dbReference>
<dbReference type="InterPro" id="IPR036719">
    <property type="entry name" value="Neuro-gated_channel_TM_sf"/>
</dbReference>
<dbReference type="InterPro" id="IPR038050">
    <property type="entry name" value="Neuro_actylchol_rec"/>
</dbReference>
<dbReference type="InterPro" id="IPR006029">
    <property type="entry name" value="Neurotrans-gated_channel_TM"/>
</dbReference>
<dbReference type="InterPro" id="IPR018000">
    <property type="entry name" value="Neurotransmitter_ion_chnl_CS"/>
</dbReference>
<dbReference type="PANTHER" id="PTHR18945">
    <property type="entry name" value="NEUROTRANSMITTER GATED ION CHANNEL"/>
    <property type="match status" value="1"/>
</dbReference>
<dbReference type="Pfam" id="PF02931">
    <property type="entry name" value="Neur_chan_LBD"/>
    <property type="match status" value="1"/>
</dbReference>
<dbReference type="Pfam" id="PF02932">
    <property type="entry name" value="Neur_chan_memb"/>
    <property type="match status" value="1"/>
</dbReference>
<dbReference type="PRINTS" id="PR00252">
    <property type="entry name" value="NRIONCHANNEL"/>
</dbReference>
<dbReference type="SUPFAM" id="SSF90112">
    <property type="entry name" value="Neurotransmitter-gated ion-channel transmembrane pore"/>
    <property type="match status" value="1"/>
</dbReference>
<dbReference type="SUPFAM" id="SSF63712">
    <property type="entry name" value="Nicotinic receptor ligand binding domain-like"/>
    <property type="match status" value="1"/>
</dbReference>
<dbReference type="PROSITE" id="PS00236">
    <property type="entry name" value="NEUROTR_ION_CHANNEL"/>
    <property type="match status" value="1"/>
</dbReference>